<evidence type="ECO:0000255" key="1">
    <source>
        <dbReference type="HAMAP-Rule" id="MF_01368"/>
    </source>
</evidence>
<evidence type="ECO:0000305" key="2"/>
<gene>
    <name evidence="1" type="primary">rplQ</name>
    <name type="ordered locus">CC_1273</name>
</gene>
<proteinExistence type="inferred from homology"/>
<keyword id="KW-1185">Reference proteome</keyword>
<keyword id="KW-0687">Ribonucleoprotein</keyword>
<keyword id="KW-0689">Ribosomal protein</keyword>
<organism>
    <name type="scientific">Caulobacter vibrioides (strain ATCC 19089 / CIP 103742 / CB 15)</name>
    <name type="common">Caulobacter crescentus</name>
    <dbReference type="NCBI Taxonomy" id="190650"/>
    <lineage>
        <taxon>Bacteria</taxon>
        <taxon>Pseudomonadati</taxon>
        <taxon>Pseudomonadota</taxon>
        <taxon>Alphaproteobacteria</taxon>
        <taxon>Caulobacterales</taxon>
        <taxon>Caulobacteraceae</taxon>
        <taxon>Caulobacter</taxon>
    </lineage>
</organism>
<accession>Q9A8S8</accession>
<name>RL17_CAUVC</name>
<sequence length="137" mass="15326">MRHGKAHRKLGRTSAHRTAMFANMSASLIKHEQIVTTLPKAKELRPIVEKLVTLAKRGDLHARRQAISSVRDVEQVGKLFAVLGPRYKERQGGYIRVLKAGFRYGDNAPMAVIEFVDRDVSEKGKDSGPVYVNDAED</sequence>
<feature type="chain" id="PRO_0000267852" description="Large ribosomal subunit protein bL17">
    <location>
        <begin position="1"/>
        <end position="137"/>
    </location>
</feature>
<dbReference type="EMBL" id="AE005673">
    <property type="protein sequence ID" value="AAK23254.1"/>
    <property type="molecule type" value="Genomic_DNA"/>
</dbReference>
<dbReference type="PIR" id="B87407">
    <property type="entry name" value="B87407"/>
</dbReference>
<dbReference type="RefSeq" id="NP_420086.1">
    <property type="nucleotide sequence ID" value="NC_002696.2"/>
</dbReference>
<dbReference type="RefSeq" id="WP_010919152.1">
    <property type="nucleotide sequence ID" value="NC_002696.2"/>
</dbReference>
<dbReference type="SMR" id="Q9A8S8"/>
<dbReference type="STRING" id="190650.CC_1273"/>
<dbReference type="EnsemblBacteria" id="AAK23254">
    <property type="protein sequence ID" value="AAK23254"/>
    <property type="gene ID" value="CC_1273"/>
</dbReference>
<dbReference type="KEGG" id="ccr:CC_1273"/>
<dbReference type="PATRIC" id="fig|190650.5.peg.1298"/>
<dbReference type="eggNOG" id="COG0203">
    <property type="taxonomic scope" value="Bacteria"/>
</dbReference>
<dbReference type="HOGENOM" id="CLU_074407_2_0_5"/>
<dbReference type="BioCyc" id="CAULO:CC1273-MONOMER"/>
<dbReference type="Proteomes" id="UP000001816">
    <property type="component" value="Chromosome"/>
</dbReference>
<dbReference type="GO" id="GO:0022625">
    <property type="term" value="C:cytosolic large ribosomal subunit"/>
    <property type="evidence" value="ECO:0007669"/>
    <property type="project" value="TreeGrafter"/>
</dbReference>
<dbReference type="GO" id="GO:0003735">
    <property type="term" value="F:structural constituent of ribosome"/>
    <property type="evidence" value="ECO:0007669"/>
    <property type="project" value="InterPro"/>
</dbReference>
<dbReference type="GO" id="GO:0006412">
    <property type="term" value="P:translation"/>
    <property type="evidence" value="ECO:0007669"/>
    <property type="project" value="UniProtKB-UniRule"/>
</dbReference>
<dbReference type="FunFam" id="3.90.1030.10:FF:000001">
    <property type="entry name" value="50S ribosomal protein L17"/>
    <property type="match status" value="1"/>
</dbReference>
<dbReference type="Gene3D" id="3.90.1030.10">
    <property type="entry name" value="Ribosomal protein L17"/>
    <property type="match status" value="1"/>
</dbReference>
<dbReference type="HAMAP" id="MF_01368">
    <property type="entry name" value="Ribosomal_bL17"/>
    <property type="match status" value="1"/>
</dbReference>
<dbReference type="InterPro" id="IPR000456">
    <property type="entry name" value="Ribosomal_bL17"/>
</dbReference>
<dbReference type="InterPro" id="IPR047859">
    <property type="entry name" value="Ribosomal_bL17_CS"/>
</dbReference>
<dbReference type="InterPro" id="IPR036373">
    <property type="entry name" value="Ribosomal_bL17_sf"/>
</dbReference>
<dbReference type="NCBIfam" id="TIGR00059">
    <property type="entry name" value="L17"/>
    <property type="match status" value="1"/>
</dbReference>
<dbReference type="PANTHER" id="PTHR14413:SF16">
    <property type="entry name" value="LARGE RIBOSOMAL SUBUNIT PROTEIN BL17M"/>
    <property type="match status" value="1"/>
</dbReference>
<dbReference type="PANTHER" id="PTHR14413">
    <property type="entry name" value="RIBOSOMAL PROTEIN L17"/>
    <property type="match status" value="1"/>
</dbReference>
<dbReference type="Pfam" id="PF01196">
    <property type="entry name" value="Ribosomal_L17"/>
    <property type="match status" value="1"/>
</dbReference>
<dbReference type="SUPFAM" id="SSF64263">
    <property type="entry name" value="Prokaryotic ribosomal protein L17"/>
    <property type="match status" value="1"/>
</dbReference>
<dbReference type="PROSITE" id="PS01167">
    <property type="entry name" value="RIBOSOMAL_L17"/>
    <property type="match status" value="1"/>
</dbReference>
<reference key="1">
    <citation type="journal article" date="2001" name="Proc. Natl. Acad. Sci. U.S.A.">
        <title>Complete genome sequence of Caulobacter crescentus.</title>
        <authorList>
            <person name="Nierman W.C."/>
            <person name="Feldblyum T.V."/>
            <person name="Laub M.T."/>
            <person name="Paulsen I.T."/>
            <person name="Nelson K.E."/>
            <person name="Eisen J.A."/>
            <person name="Heidelberg J.F."/>
            <person name="Alley M.R.K."/>
            <person name="Ohta N."/>
            <person name="Maddock J.R."/>
            <person name="Potocka I."/>
            <person name="Nelson W.C."/>
            <person name="Newton A."/>
            <person name="Stephens C."/>
            <person name="Phadke N.D."/>
            <person name="Ely B."/>
            <person name="DeBoy R.T."/>
            <person name="Dodson R.J."/>
            <person name="Durkin A.S."/>
            <person name="Gwinn M.L."/>
            <person name="Haft D.H."/>
            <person name="Kolonay J.F."/>
            <person name="Smit J."/>
            <person name="Craven M.B."/>
            <person name="Khouri H.M."/>
            <person name="Shetty J."/>
            <person name="Berry K.J."/>
            <person name="Utterback T.R."/>
            <person name="Tran K."/>
            <person name="Wolf A.M."/>
            <person name="Vamathevan J.J."/>
            <person name="Ermolaeva M.D."/>
            <person name="White O."/>
            <person name="Salzberg S.L."/>
            <person name="Venter J.C."/>
            <person name="Shapiro L."/>
            <person name="Fraser C.M."/>
        </authorList>
    </citation>
    <scope>NUCLEOTIDE SEQUENCE [LARGE SCALE GENOMIC DNA]</scope>
    <source>
        <strain>ATCC 19089 / CIP 103742 / CB 15</strain>
    </source>
</reference>
<comment type="subunit">
    <text evidence="1">Part of the 50S ribosomal subunit. Contacts protein L32.</text>
</comment>
<comment type="similarity">
    <text evidence="1">Belongs to the bacterial ribosomal protein bL17 family.</text>
</comment>
<protein>
    <recommendedName>
        <fullName evidence="1">Large ribosomal subunit protein bL17</fullName>
    </recommendedName>
    <alternativeName>
        <fullName evidence="2">50S ribosomal protein L17</fullName>
    </alternativeName>
</protein>